<name>ANF_TAKRU</name>
<reference key="1">
    <citation type="journal article" date="2004" name="J. Mol. Endocrinol.">
        <title>Four natriuretic peptides (ANP, BNP, VNP and CNP) coexist in the sturgeon: identification of BNP in fish lineage.</title>
        <authorList>
            <person name="Kawakoshi A."/>
            <person name="Hyodo S."/>
            <person name="Inoue K."/>
            <person name="Kobayashi Y."/>
            <person name="Takei Y."/>
        </authorList>
    </citation>
    <scope>NUCLEOTIDE SEQUENCE [MRNA]</scope>
    <source>
        <tissue>Heart</tissue>
    </source>
</reference>
<proteinExistence type="evidence at transcript level"/>
<organism>
    <name type="scientific">Takifugu rubripes</name>
    <name type="common">Japanese pufferfish</name>
    <name type="synonym">Fugu rubripes</name>
    <dbReference type="NCBI Taxonomy" id="31033"/>
    <lineage>
        <taxon>Eukaryota</taxon>
        <taxon>Metazoa</taxon>
        <taxon>Chordata</taxon>
        <taxon>Craniata</taxon>
        <taxon>Vertebrata</taxon>
        <taxon>Euteleostomi</taxon>
        <taxon>Actinopterygii</taxon>
        <taxon>Neopterygii</taxon>
        <taxon>Teleostei</taxon>
        <taxon>Neoteleostei</taxon>
        <taxon>Acanthomorphata</taxon>
        <taxon>Eupercaria</taxon>
        <taxon>Tetraodontiformes</taxon>
        <taxon>Tetradontoidea</taxon>
        <taxon>Tetraodontidae</taxon>
        <taxon>Takifugu</taxon>
    </lineage>
</organism>
<accession>Q805D8</accession>
<evidence type="ECO:0000250" key="1"/>
<evidence type="ECO:0000250" key="2">
    <source>
        <dbReference type="UniProtKB" id="P18144"/>
    </source>
</evidence>
<evidence type="ECO:0000255" key="3"/>
<evidence type="ECO:0000305" key="4"/>
<dbReference type="EMBL" id="AB089933">
    <property type="protein sequence ID" value="BAC57069.1"/>
    <property type="molecule type" value="mRNA"/>
</dbReference>
<dbReference type="RefSeq" id="NP_001027737.1">
    <property type="nucleotide sequence ID" value="NM_001032565.2"/>
</dbReference>
<dbReference type="FunCoup" id="Q805D8">
    <property type="interactions" value="914"/>
</dbReference>
<dbReference type="STRING" id="31033.ENSTRUP00000088156"/>
<dbReference type="Ensembl" id="ENSTRUT00000051079.2">
    <property type="protein sequence ID" value="ENSTRUP00000051116.2"/>
    <property type="gene ID" value="ENSTRUG00000020513.2"/>
</dbReference>
<dbReference type="GeneID" id="445903"/>
<dbReference type="KEGG" id="tru:445903"/>
<dbReference type="CTD" id="4878"/>
<dbReference type="GeneTree" id="ENSGT00940000154513"/>
<dbReference type="HOGENOM" id="CLU_3370855_0_0_1"/>
<dbReference type="InParanoid" id="Q805D8"/>
<dbReference type="OMA" id="LCQHTLV"/>
<dbReference type="OrthoDB" id="8865096at2759"/>
<dbReference type="Proteomes" id="UP000005226">
    <property type="component" value="Chromosome 20"/>
</dbReference>
<dbReference type="GO" id="GO:0005737">
    <property type="term" value="C:cytoplasm"/>
    <property type="evidence" value="ECO:0007669"/>
    <property type="project" value="TreeGrafter"/>
</dbReference>
<dbReference type="GO" id="GO:0005615">
    <property type="term" value="C:extracellular space"/>
    <property type="evidence" value="ECO:0007669"/>
    <property type="project" value="TreeGrafter"/>
</dbReference>
<dbReference type="GO" id="GO:0005179">
    <property type="term" value="F:hormone activity"/>
    <property type="evidence" value="ECO:0007669"/>
    <property type="project" value="UniProtKB-KW"/>
</dbReference>
<dbReference type="GO" id="GO:0051427">
    <property type="term" value="F:hormone receptor binding"/>
    <property type="evidence" value="ECO:0007669"/>
    <property type="project" value="TreeGrafter"/>
</dbReference>
<dbReference type="GO" id="GO:0097746">
    <property type="term" value="P:blood vessel diameter maintenance"/>
    <property type="evidence" value="ECO:0007669"/>
    <property type="project" value="UniProtKB-KW"/>
</dbReference>
<dbReference type="GO" id="GO:0006182">
    <property type="term" value="P:cGMP biosynthetic process"/>
    <property type="evidence" value="ECO:0000250"/>
    <property type="project" value="GO_Central"/>
</dbReference>
<dbReference type="GO" id="GO:0019934">
    <property type="term" value="P:cGMP-mediated signaling"/>
    <property type="evidence" value="ECO:0007669"/>
    <property type="project" value="TreeGrafter"/>
</dbReference>
<dbReference type="GO" id="GO:0003085">
    <property type="term" value="P:negative regulation of systemic arterial blood pressure"/>
    <property type="evidence" value="ECO:0007669"/>
    <property type="project" value="TreeGrafter"/>
</dbReference>
<dbReference type="GO" id="GO:0007218">
    <property type="term" value="P:neuropeptide signaling pathway"/>
    <property type="evidence" value="ECO:0007669"/>
    <property type="project" value="TreeGrafter"/>
</dbReference>
<dbReference type="GO" id="GO:0007168">
    <property type="term" value="P:receptor guanylyl cyclase signaling pathway"/>
    <property type="evidence" value="ECO:0000250"/>
    <property type="project" value="UniProtKB"/>
</dbReference>
<dbReference type="InterPro" id="IPR000663">
    <property type="entry name" value="Natr_peptide"/>
</dbReference>
<dbReference type="InterPro" id="IPR030480">
    <property type="entry name" value="Natr_peptide_CS"/>
</dbReference>
<dbReference type="InterPro" id="IPR050787">
    <property type="entry name" value="Natriuretic_peptide"/>
</dbReference>
<dbReference type="PANTHER" id="PTHR14066">
    <property type="entry name" value="ATRIAL NATRIURETIC FACTOR PRECURSOR"/>
    <property type="match status" value="1"/>
</dbReference>
<dbReference type="PANTHER" id="PTHR14066:SF10">
    <property type="entry name" value="NATRIURETIC PEPTIDES B"/>
    <property type="match status" value="1"/>
</dbReference>
<dbReference type="Pfam" id="PF00212">
    <property type="entry name" value="ANP"/>
    <property type="match status" value="1"/>
</dbReference>
<dbReference type="SMART" id="SM00183">
    <property type="entry name" value="NAT_PEP"/>
    <property type="match status" value="1"/>
</dbReference>
<dbReference type="PROSITE" id="PS00263">
    <property type="entry name" value="NATRIURETIC_PEPTIDE"/>
    <property type="match status" value="1"/>
</dbReference>
<sequence>MTALVLWGLLLLLGQHTQVNSHVLGRPFSASDSSQLKSLLERLEETISEADQEQNPELDQEVEYDIRDQDPGQRWNLDLGRDQDQVTATRSEIHSRPSVQRSHLQDLLMSLRKRASSCFGARMDRIGNASGLGCNNGRG</sequence>
<keyword id="KW-0165">Cleavage on pair of basic residues</keyword>
<keyword id="KW-1015">Disulfide bond</keyword>
<keyword id="KW-0372">Hormone</keyword>
<keyword id="KW-1185">Reference proteome</keyword>
<keyword id="KW-0964">Secreted</keyword>
<keyword id="KW-0732">Signal</keyword>
<keyword id="KW-0838">Vasoactive</keyword>
<protein>
    <recommendedName>
        <fullName>Natriuretic peptides A</fullName>
    </recommendedName>
    <alternativeName>
        <fullName>Prepronatriodilatin</fullName>
    </alternativeName>
    <component>
        <recommendedName>
            <fullName>Atrial natriuretic factor</fullName>
            <shortName>ANF</shortName>
        </recommendedName>
        <alternativeName>
            <fullName>Atrial natriuretic peptide</fullName>
            <shortName>ANP</shortName>
        </alternativeName>
    </component>
</protein>
<comment type="function">
    <text evidence="1">Hormone playing a key role in cardiovascular homeostasis through regulation of natriuresis, diuresis, and vasodilation. Has a cGMP-stimulating activity (By similarity).</text>
</comment>
<comment type="subcellular location">
    <subcellularLocation>
        <location>Secreted</location>
    </subcellularLocation>
</comment>
<comment type="similarity">
    <text evidence="4">Belongs to the natriuretic peptide family.</text>
</comment>
<gene>
    <name type="primary">nppa</name>
    <name type="synonym">anp</name>
</gene>
<feature type="signal peptide" evidence="3">
    <location>
        <begin position="1"/>
        <end position="21"/>
    </location>
</feature>
<feature type="propeptide" id="PRO_0000001519" evidence="4">
    <location>
        <begin position="22"/>
        <end position="114"/>
    </location>
</feature>
<feature type="peptide" id="PRO_0000001520" description="Atrial natriuretic factor" evidence="2">
    <location>
        <begin position="115"/>
        <end position="139"/>
    </location>
</feature>
<feature type="disulfide bond" evidence="2">
    <location>
        <begin position="118"/>
        <end position="134"/>
    </location>
</feature>